<comment type="function">
    <text evidence="1">ATP-dependent specificity component of the Clp protease. It directs the protease to specific substrates. Can perform chaperone functions in the absence of ClpP.</text>
</comment>
<comment type="subunit">
    <text evidence="1">Component of the ClpX-ClpP complex. Forms a hexameric ring that, in the presence of ATP, binds to fourteen ClpP subunits assembled into a disk-like structure with a central cavity, resembling the structure of eukaryotic proteasomes.</text>
</comment>
<comment type="similarity">
    <text evidence="1">Belongs to the ClpX chaperone family.</text>
</comment>
<evidence type="ECO:0000255" key="1">
    <source>
        <dbReference type="HAMAP-Rule" id="MF_00175"/>
    </source>
</evidence>
<evidence type="ECO:0000255" key="2">
    <source>
        <dbReference type="PROSITE-ProRule" id="PRU01250"/>
    </source>
</evidence>
<protein>
    <recommendedName>
        <fullName evidence="1">ATP-dependent Clp protease ATP-binding subunit ClpX</fullName>
    </recommendedName>
</protein>
<accession>A5VQN3</accession>
<name>CLPX_BRUO2</name>
<sequence length="427" mass="46915">MSKVSNGGGDSKNTLYCSFCGKSQHEVRKLIAGPTVFICDECVELCMDIIREENKSSMVKSREGVPTPQEIMAVLDDYVIGQKDAKRVLSVAVHNHYKRLAHQSKNSDIELAKSNILLVGPTGCGKTYLAQTLARIIDVPFIMADATTLTEAGYVGEDVENIILKLLQAADYNVERAQRGIVYIDEVDKISRKSDNPSITRDVSGEGVQQALLKIMEGTVASVPPQGGRKHPQQEFLQVDTTNILFICGGAFAGLDRIISARGEKTSIGFGATVKSVDERRIGEVFKELEPEDLLKFGLIPEFVGRLPVIATLEDLDVDALVQILTEPKNALVKQYQRLFDMENVELVFHDDALRAIANKAVERKTGARGLRSIMEKILLDTMFELPTLEGVREVVISGDVVDGSARPLYIYAERQDEKGNVSAGMA</sequence>
<keyword id="KW-0067">ATP-binding</keyword>
<keyword id="KW-0143">Chaperone</keyword>
<keyword id="KW-0479">Metal-binding</keyword>
<keyword id="KW-0547">Nucleotide-binding</keyword>
<keyword id="KW-0862">Zinc</keyword>
<dbReference type="EMBL" id="CP000708">
    <property type="protein sequence ID" value="ABQ61526.1"/>
    <property type="molecule type" value="Genomic_DNA"/>
</dbReference>
<dbReference type="RefSeq" id="WP_006012619.1">
    <property type="nucleotide sequence ID" value="NC_009505.1"/>
</dbReference>
<dbReference type="SMR" id="A5VQN3"/>
<dbReference type="GeneID" id="45124486"/>
<dbReference type="KEGG" id="bov:BOV_1066"/>
<dbReference type="HOGENOM" id="CLU_014218_8_2_5"/>
<dbReference type="PhylomeDB" id="A5VQN3"/>
<dbReference type="Proteomes" id="UP000006383">
    <property type="component" value="Chromosome I"/>
</dbReference>
<dbReference type="GO" id="GO:0009376">
    <property type="term" value="C:HslUV protease complex"/>
    <property type="evidence" value="ECO:0007669"/>
    <property type="project" value="TreeGrafter"/>
</dbReference>
<dbReference type="GO" id="GO:0005524">
    <property type="term" value="F:ATP binding"/>
    <property type="evidence" value="ECO:0007669"/>
    <property type="project" value="UniProtKB-UniRule"/>
</dbReference>
<dbReference type="GO" id="GO:0016887">
    <property type="term" value="F:ATP hydrolysis activity"/>
    <property type="evidence" value="ECO:0007669"/>
    <property type="project" value="InterPro"/>
</dbReference>
<dbReference type="GO" id="GO:0140662">
    <property type="term" value="F:ATP-dependent protein folding chaperone"/>
    <property type="evidence" value="ECO:0007669"/>
    <property type="project" value="InterPro"/>
</dbReference>
<dbReference type="GO" id="GO:0046983">
    <property type="term" value="F:protein dimerization activity"/>
    <property type="evidence" value="ECO:0007669"/>
    <property type="project" value="InterPro"/>
</dbReference>
<dbReference type="GO" id="GO:0051082">
    <property type="term" value="F:unfolded protein binding"/>
    <property type="evidence" value="ECO:0007669"/>
    <property type="project" value="UniProtKB-UniRule"/>
</dbReference>
<dbReference type="GO" id="GO:0008270">
    <property type="term" value="F:zinc ion binding"/>
    <property type="evidence" value="ECO:0007669"/>
    <property type="project" value="InterPro"/>
</dbReference>
<dbReference type="GO" id="GO:0051301">
    <property type="term" value="P:cell division"/>
    <property type="evidence" value="ECO:0007669"/>
    <property type="project" value="TreeGrafter"/>
</dbReference>
<dbReference type="GO" id="GO:0051603">
    <property type="term" value="P:proteolysis involved in protein catabolic process"/>
    <property type="evidence" value="ECO:0007669"/>
    <property type="project" value="TreeGrafter"/>
</dbReference>
<dbReference type="CDD" id="cd19497">
    <property type="entry name" value="RecA-like_ClpX"/>
    <property type="match status" value="1"/>
</dbReference>
<dbReference type="FunFam" id="1.10.8.60:FF:000002">
    <property type="entry name" value="ATP-dependent Clp protease ATP-binding subunit ClpX"/>
    <property type="match status" value="1"/>
</dbReference>
<dbReference type="FunFam" id="3.40.50.300:FF:000005">
    <property type="entry name" value="ATP-dependent Clp protease ATP-binding subunit ClpX"/>
    <property type="match status" value="1"/>
</dbReference>
<dbReference type="Gene3D" id="1.10.8.60">
    <property type="match status" value="1"/>
</dbReference>
<dbReference type="Gene3D" id="6.20.220.10">
    <property type="entry name" value="ClpX chaperone, C4-type zinc finger domain"/>
    <property type="match status" value="1"/>
</dbReference>
<dbReference type="Gene3D" id="3.40.50.300">
    <property type="entry name" value="P-loop containing nucleotide triphosphate hydrolases"/>
    <property type="match status" value="1"/>
</dbReference>
<dbReference type="HAMAP" id="MF_00175">
    <property type="entry name" value="ClpX"/>
    <property type="match status" value="1"/>
</dbReference>
<dbReference type="InterPro" id="IPR003593">
    <property type="entry name" value="AAA+_ATPase"/>
</dbReference>
<dbReference type="InterPro" id="IPR050052">
    <property type="entry name" value="ATP-dep_Clp_protease_ClpX"/>
</dbReference>
<dbReference type="InterPro" id="IPR003959">
    <property type="entry name" value="ATPase_AAA_core"/>
</dbReference>
<dbReference type="InterPro" id="IPR019489">
    <property type="entry name" value="Clp_ATPase_C"/>
</dbReference>
<dbReference type="InterPro" id="IPR004487">
    <property type="entry name" value="Clp_protease_ATP-bd_su_ClpX"/>
</dbReference>
<dbReference type="InterPro" id="IPR046425">
    <property type="entry name" value="ClpX_bact"/>
</dbReference>
<dbReference type="InterPro" id="IPR027417">
    <property type="entry name" value="P-loop_NTPase"/>
</dbReference>
<dbReference type="InterPro" id="IPR010603">
    <property type="entry name" value="Znf_CppX_C4"/>
</dbReference>
<dbReference type="InterPro" id="IPR038366">
    <property type="entry name" value="Znf_CppX_C4_sf"/>
</dbReference>
<dbReference type="NCBIfam" id="TIGR00382">
    <property type="entry name" value="clpX"/>
    <property type="match status" value="1"/>
</dbReference>
<dbReference type="NCBIfam" id="NF003745">
    <property type="entry name" value="PRK05342.1"/>
    <property type="match status" value="1"/>
</dbReference>
<dbReference type="PANTHER" id="PTHR48102:SF7">
    <property type="entry name" value="ATP-DEPENDENT CLP PROTEASE ATP-BINDING SUBUNIT CLPX-LIKE, MITOCHONDRIAL"/>
    <property type="match status" value="1"/>
</dbReference>
<dbReference type="PANTHER" id="PTHR48102">
    <property type="entry name" value="ATP-DEPENDENT CLP PROTEASE ATP-BINDING SUBUNIT CLPX-LIKE, MITOCHONDRIAL-RELATED"/>
    <property type="match status" value="1"/>
</dbReference>
<dbReference type="Pfam" id="PF07724">
    <property type="entry name" value="AAA_2"/>
    <property type="match status" value="1"/>
</dbReference>
<dbReference type="Pfam" id="PF10431">
    <property type="entry name" value="ClpB_D2-small"/>
    <property type="match status" value="1"/>
</dbReference>
<dbReference type="Pfam" id="PF06689">
    <property type="entry name" value="zf-C4_ClpX"/>
    <property type="match status" value="1"/>
</dbReference>
<dbReference type="SMART" id="SM00382">
    <property type="entry name" value="AAA"/>
    <property type="match status" value="1"/>
</dbReference>
<dbReference type="SMART" id="SM01086">
    <property type="entry name" value="ClpB_D2-small"/>
    <property type="match status" value="1"/>
</dbReference>
<dbReference type="SMART" id="SM00994">
    <property type="entry name" value="zf-C4_ClpX"/>
    <property type="match status" value="1"/>
</dbReference>
<dbReference type="SUPFAM" id="SSF57716">
    <property type="entry name" value="Glucocorticoid receptor-like (DNA-binding domain)"/>
    <property type="match status" value="1"/>
</dbReference>
<dbReference type="SUPFAM" id="SSF52540">
    <property type="entry name" value="P-loop containing nucleoside triphosphate hydrolases"/>
    <property type="match status" value="1"/>
</dbReference>
<dbReference type="PROSITE" id="PS51902">
    <property type="entry name" value="CLPX_ZB"/>
    <property type="match status" value="1"/>
</dbReference>
<reference key="1">
    <citation type="journal article" date="2009" name="PLoS ONE">
        <title>Genome degradation in Brucella ovis corresponds with narrowing of its host range and tissue tropism.</title>
        <authorList>
            <person name="Tsolis R.M."/>
            <person name="Seshadri R."/>
            <person name="Santos R.L."/>
            <person name="Sangari F.J."/>
            <person name="Lobo J.M."/>
            <person name="de Jong M.F."/>
            <person name="Ren Q."/>
            <person name="Myers G."/>
            <person name="Brinkac L.M."/>
            <person name="Nelson W.C."/>
            <person name="Deboy R.T."/>
            <person name="Angiuoli S."/>
            <person name="Khouri H."/>
            <person name="Dimitrov G."/>
            <person name="Robinson J.R."/>
            <person name="Mulligan S."/>
            <person name="Walker R.L."/>
            <person name="Elzer P.E."/>
            <person name="Hassan K.A."/>
            <person name="Paulsen I.T."/>
        </authorList>
    </citation>
    <scope>NUCLEOTIDE SEQUENCE [LARGE SCALE GENOMIC DNA]</scope>
    <source>
        <strain>ATCC 25840 / 63/290 / NCTC 10512</strain>
    </source>
</reference>
<organism>
    <name type="scientific">Brucella ovis (strain ATCC 25840 / 63/290 / NCTC 10512)</name>
    <dbReference type="NCBI Taxonomy" id="444178"/>
    <lineage>
        <taxon>Bacteria</taxon>
        <taxon>Pseudomonadati</taxon>
        <taxon>Pseudomonadota</taxon>
        <taxon>Alphaproteobacteria</taxon>
        <taxon>Hyphomicrobiales</taxon>
        <taxon>Brucellaceae</taxon>
        <taxon>Brucella/Ochrobactrum group</taxon>
        <taxon>Brucella</taxon>
    </lineage>
</organism>
<proteinExistence type="inferred from homology"/>
<gene>
    <name evidence="1" type="primary">clpX</name>
    <name type="ordered locus">BOV_1066</name>
</gene>
<feature type="chain" id="PRO_1000024524" description="ATP-dependent Clp protease ATP-binding subunit ClpX">
    <location>
        <begin position="1"/>
        <end position="427"/>
    </location>
</feature>
<feature type="domain" description="ClpX-type ZB" evidence="2">
    <location>
        <begin position="5"/>
        <end position="58"/>
    </location>
</feature>
<feature type="binding site" evidence="2">
    <location>
        <position position="17"/>
    </location>
    <ligand>
        <name>Zn(2+)</name>
        <dbReference type="ChEBI" id="CHEBI:29105"/>
    </ligand>
</feature>
<feature type="binding site" evidence="2">
    <location>
        <position position="20"/>
    </location>
    <ligand>
        <name>Zn(2+)</name>
        <dbReference type="ChEBI" id="CHEBI:29105"/>
    </ligand>
</feature>
<feature type="binding site" evidence="2">
    <location>
        <position position="39"/>
    </location>
    <ligand>
        <name>Zn(2+)</name>
        <dbReference type="ChEBI" id="CHEBI:29105"/>
    </ligand>
</feature>
<feature type="binding site" evidence="2">
    <location>
        <position position="42"/>
    </location>
    <ligand>
        <name>Zn(2+)</name>
        <dbReference type="ChEBI" id="CHEBI:29105"/>
    </ligand>
</feature>
<feature type="binding site" evidence="1">
    <location>
        <begin position="121"/>
        <end position="128"/>
    </location>
    <ligand>
        <name>ATP</name>
        <dbReference type="ChEBI" id="CHEBI:30616"/>
    </ligand>
</feature>